<keyword id="KW-0963">Cytoplasm</keyword>
<keyword id="KW-0342">GTP-binding</keyword>
<keyword id="KW-0547">Nucleotide-binding</keyword>
<keyword id="KW-0648">Protein biosynthesis</keyword>
<keyword id="KW-1185">Reference proteome</keyword>
<comment type="function">
    <text evidence="1">Increases the formation of ribosomal termination complexes and stimulates activities of RF-1 and RF-2. It binds guanine nucleotides and has strong preference for UGA stop codons. It may interact directly with the ribosome. The stimulation of RF-1 and RF-2 is significantly reduced by GTP and GDP, but not by GMP.</text>
</comment>
<comment type="subcellular location">
    <subcellularLocation>
        <location evidence="1">Cytoplasm</location>
    </subcellularLocation>
</comment>
<comment type="similarity">
    <text evidence="1">Belongs to the TRAFAC class translation factor GTPase superfamily. Classic translation factor GTPase family. PrfC subfamily.</text>
</comment>
<dbReference type="EMBL" id="CP000029">
    <property type="protein sequence ID" value="AAW54035.1"/>
    <property type="molecule type" value="Genomic_DNA"/>
</dbReference>
<dbReference type="RefSeq" id="WP_002446117.1">
    <property type="nucleotide sequence ID" value="NC_002976.3"/>
</dbReference>
<dbReference type="SMR" id="Q5HQE4"/>
<dbReference type="STRING" id="176279.SERP0609"/>
<dbReference type="KEGG" id="ser:SERP0609"/>
<dbReference type="eggNOG" id="COG4108">
    <property type="taxonomic scope" value="Bacteria"/>
</dbReference>
<dbReference type="HOGENOM" id="CLU_002794_2_1_9"/>
<dbReference type="Proteomes" id="UP000000531">
    <property type="component" value="Chromosome"/>
</dbReference>
<dbReference type="GO" id="GO:0005829">
    <property type="term" value="C:cytosol"/>
    <property type="evidence" value="ECO:0007669"/>
    <property type="project" value="TreeGrafter"/>
</dbReference>
<dbReference type="GO" id="GO:0005525">
    <property type="term" value="F:GTP binding"/>
    <property type="evidence" value="ECO:0007669"/>
    <property type="project" value="UniProtKB-UniRule"/>
</dbReference>
<dbReference type="GO" id="GO:0003924">
    <property type="term" value="F:GTPase activity"/>
    <property type="evidence" value="ECO:0007669"/>
    <property type="project" value="InterPro"/>
</dbReference>
<dbReference type="GO" id="GO:0016150">
    <property type="term" value="F:translation release factor activity, codon nonspecific"/>
    <property type="evidence" value="ECO:0007669"/>
    <property type="project" value="TreeGrafter"/>
</dbReference>
<dbReference type="GO" id="GO:0016149">
    <property type="term" value="F:translation release factor activity, codon specific"/>
    <property type="evidence" value="ECO:0007669"/>
    <property type="project" value="UniProtKB-UniRule"/>
</dbReference>
<dbReference type="GO" id="GO:0006449">
    <property type="term" value="P:regulation of translational termination"/>
    <property type="evidence" value="ECO:0007669"/>
    <property type="project" value="UniProtKB-UniRule"/>
</dbReference>
<dbReference type="CDD" id="cd04169">
    <property type="entry name" value="RF3"/>
    <property type="match status" value="1"/>
</dbReference>
<dbReference type="CDD" id="cd16259">
    <property type="entry name" value="RF3_III"/>
    <property type="match status" value="1"/>
</dbReference>
<dbReference type="FunFam" id="2.40.30.10:FF:000040">
    <property type="entry name" value="Peptide chain release factor 3"/>
    <property type="match status" value="1"/>
</dbReference>
<dbReference type="FunFam" id="3.30.70.3280:FF:000001">
    <property type="entry name" value="Peptide chain release factor 3"/>
    <property type="match status" value="1"/>
</dbReference>
<dbReference type="FunFam" id="3.40.50.300:FF:000542">
    <property type="entry name" value="Peptide chain release factor 3"/>
    <property type="match status" value="1"/>
</dbReference>
<dbReference type="Gene3D" id="3.40.50.300">
    <property type="entry name" value="P-loop containing nucleotide triphosphate hydrolases"/>
    <property type="match status" value="1"/>
</dbReference>
<dbReference type="Gene3D" id="3.30.70.3280">
    <property type="entry name" value="Peptide chain release factor 3, domain III"/>
    <property type="match status" value="1"/>
</dbReference>
<dbReference type="Gene3D" id="2.40.30.10">
    <property type="entry name" value="Translation factors"/>
    <property type="match status" value="1"/>
</dbReference>
<dbReference type="HAMAP" id="MF_00072">
    <property type="entry name" value="Rel_fac_3"/>
    <property type="match status" value="1"/>
</dbReference>
<dbReference type="InterPro" id="IPR053905">
    <property type="entry name" value="EF-G-like_DII"/>
</dbReference>
<dbReference type="InterPro" id="IPR035647">
    <property type="entry name" value="EFG_III/V"/>
</dbReference>
<dbReference type="InterPro" id="IPR031157">
    <property type="entry name" value="G_TR_CS"/>
</dbReference>
<dbReference type="InterPro" id="IPR027417">
    <property type="entry name" value="P-loop_NTPase"/>
</dbReference>
<dbReference type="InterPro" id="IPR004548">
    <property type="entry name" value="PrfC"/>
</dbReference>
<dbReference type="InterPro" id="IPR032090">
    <property type="entry name" value="RF3_C"/>
</dbReference>
<dbReference type="InterPro" id="IPR038467">
    <property type="entry name" value="RF3_dom_3_sf"/>
</dbReference>
<dbReference type="InterPro" id="IPR041732">
    <property type="entry name" value="RF3_GTP-bd"/>
</dbReference>
<dbReference type="InterPro" id="IPR005225">
    <property type="entry name" value="Small_GTP-bd"/>
</dbReference>
<dbReference type="InterPro" id="IPR000795">
    <property type="entry name" value="T_Tr_GTP-bd_dom"/>
</dbReference>
<dbReference type="InterPro" id="IPR009000">
    <property type="entry name" value="Transl_B-barrel_sf"/>
</dbReference>
<dbReference type="NCBIfam" id="TIGR00503">
    <property type="entry name" value="prfC"/>
    <property type="match status" value="1"/>
</dbReference>
<dbReference type="NCBIfam" id="NF001964">
    <property type="entry name" value="PRK00741.1"/>
    <property type="match status" value="1"/>
</dbReference>
<dbReference type="NCBIfam" id="TIGR00231">
    <property type="entry name" value="small_GTP"/>
    <property type="match status" value="1"/>
</dbReference>
<dbReference type="PANTHER" id="PTHR43556">
    <property type="entry name" value="PEPTIDE CHAIN RELEASE FACTOR RF3"/>
    <property type="match status" value="1"/>
</dbReference>
<dbReference type="PANTHER" id="PTHR43556:SF2">
    <property type="entry name" value="PEPTIDE CHAIN RELEASE FACTOR RF3"/>
    <property type="match status" value="1"/>
</dbReference>
<dbReference type="Pfam" id="PF22042">
    <property type="entry name" value="EF-G_D2"/>
    <property type="match status" value="1"/>
</dbReference>
<dbReference type="Pfam" id="PF00009">
    <property type="entry name" value="GTP_EFTU"/>
    <property type="match status" value="1"/>
</dbReference>
<dbReference type="Pfam" id="PF16658">
    <property type="entry name" value="RF3_C"/>
    <property type="match status" value="1"/>
</dbReference>
<dbReference type="PRINTS" id="PR00315">
    <property type="entry name" value="ELONGATNFCT"/>
</dbReference>
<dbReference type="SUPFAM" id="SSF54980">
    <property type="entry name" value="EF-G C-terminal domain-like"/>
    <property type="match status" value="1"/>
</dbReference>
<dbReference type="SUPFAM" id="SSF52540">
    <property type="entry name" value="P-loop containing nucleoside triphosphate hydrolases"/>
    <property type="match status" value="1"/>
</dbReference>
<dbReference type="SUPFAM" id="SSF50447">
    <property type="entry name" value="Translation proteins"/>
    <property type="match status" value="1"/>
</dbReference>
<dbReference type="PROSITE" id="PS00301">
    <property type="entry name" value="G_TR_1"/>
    <property type="match status" value="1"/>
</dbReference>
<dbReference type="PROSITE" id="PS51722">
    <property type="entry name" value="G_TR_2"/>
    <property type="match status" value="1"/>
</dbReference>
<organism>
    <name type="scientific">Staphylococcus epidermidis (strain ATCC 35984 / DSM 28319 / BCRC 17069 / CCUG 31568 / BM 3577 / RP62A)</name>
    <dbReference type="NCBI Taxonomy" id="176279"/>
    <lineage>
        <taxon>Bacteria</taxon>
        <taxon>Bacillati</taxon>
        <taxon>Bacillota</taxon>
        <taxon>Bacilli</taxon>
        <taxon>Bacillales</taxon>
        <taxon>Staphylococcaceae</taxon>
        <taxon>Staphylococcus</taxon>
    </lineage>
</organism>
<reference key="1">
    <citation type="journal article" date="2005" name="J. Bacteriol.">
        <title>Insights on evolution of virulence and resistance from the complete genome analysis of an early methicillin-resistant Staphylococcus aureus strain and a biofilm-producing methicillin-resistant Staphylococcus epidermidis strain.</title>
        <authorList>
            <person name="Gill S.R."/>
            <person name="Fouts D.E."/>
            <person name="Archer G.L."/>
            <person name="Mongodin E.F."/>
            <person name="DeBoy R.T."/>
            <person name="Ravel J."/>
            <person name="Paulsen I.T."/>
            <person name="Kolonay J.F."/>
            <person name="Brinkac L.M."/>
            <person name="Beanan M.J."/>
            <person name="Dodson R.J."/>
            <person name="Daugherty S.C."/>
            <person name="Madupu R."/>
            <person name="Angiuoli S.V."/>
            <person name="Durkin A.S."/>
            <person name="Haft D.H."/>
            <person name="Vamathevan J.J."/>
            <person name="Khouri H."/>
            <person name="Utterback T.R."/>
            <person name="Lee C."/>
            <person name="Dimitrov G."/>
            <person name="Jiang L."/>
            <person name="Qin H."/>
            <person name="Weidman J."/>
            <person name="Tran K."/>
            <person name="Kang K.H."/>
            <person name="Hance I.R."/>
            <person name="Nelson K.E."/>
            <person name="Fraser C.M."/>
        </authorList>
    </citation>
    <scope>NUCLEOTIDE SEQUENCE [LARGE SCALE GENOMIC DNA]</scope>
    <source>
        <strain>ATCC 35984 / DSM 28319 / BCRC 17069 / CCUG 31568 / BM 3577 / RP62A</strain>
    </source>
</reference>
<feature type="chain" id="PRO_0000210968" description="Peptide chain release factor 3">
    <location>
        <begin position="1"/>
        <end position="520"/>
    </location>
</feature>
<feature type="domain" description="tr-type G">
    <location>
        <begin position="8"/>
        <end position="277"/>
    </location>
</feature>
<feature type="binding site" evidence="1">
    <location>
        <begin position="17"/>
        <end position="24"/>
    </location>
    <ligand>
        <name>GTP</name>
        <dbReference type="ChEBI" id="CHEBI:37565"/>
    </ligand>
</feature>
<feature type="binding site" evidence="1">
    <location>
        <begin position="85"/>
        <end position="89"/>
    </location>
    <ligand>
        <name>GTP</name>
        <dbReference type="ChEBI" id="CHEBI:37565"/>
    </ligand>
</feature>
<feature type="binding site" evidence="1">
    <location>
        <begin position="139"/>
        <end position="142"/>
    </location>
    <ligand>
        <name>GTP</name>
        <dbReference type="ChEBI" id="CHEBI:37565"/>
    </ligand>
</feature>
<sequence>MNLKEEIESRKTFAIISHPDAGKTTLTEKLLYFSGAIREAGTVKGKKTGKFATSDWMKVEQERGISVTSSVMQFDYDDYKINILDTPGHEDFSEDTYRTLMAVDSAVMVIDCAKGIEPQTLKLFKVCKMRGIPIFTFINKLDRVGKEPFELLDEIEETLNIDTYPMNWPVGMGQNFFGIIDRHSKTIEPFRDEENLLHLNEDYELKEEHAIKNDSAFEQAIEEMMLVDEAGEAFDNEALLNGELTPVFFGSALANFGVQNFLNAYVDHAPMPNARQTKEEVDVSPFDTDFSGFIFKIQANMDPKHRDRIAFMRVVSGAFERGMDVTLQRTNKKQKITRSTSFMADDKETVNHAVAGDIIGLYDTGNYQIGDTLVGGKQKYSFQELPQFTPEIFMKVSAKNVMKQKHFHKGIEQLVQEGAIQYYKTLHTNQIILGAVGQLQFEVFEHRMNNEYNVDVVMEPVGRKIARWIENEEDIKDNMNTSRSILVKDRYDNYVFLFENEFATRWFEEKFSDIKLYSLL</sequence>
<gene>
    <name evidence="1" type="primary">prfC</name>
    <name type="ordered locus">SERP0609</name>
</gene>
<proteinExistence type="inferred from homology"/>
<evidence type="ECO:0000255" key="1">
    <source>
        <dbReference type="HAMAP-Rule" id="MF_00072"/>
    </source>
</evidence>
<protein>
    <recommendedName>
        <fullName evidence="1">Peptide chain release factor 3</fullName>
        <shortName evidence="1">RF-3</shortName>
    </recommendedName>
</protein>
<name>RF3_STAEQ</name>
<accession>Q5HQE4</accession>